<keyword id="KW-0444">Lipid biosynthesis</keyword>
<keyword id="KW-0443">Lipid metabolism</keyword>
<keyword id="KW-0489">Methyltransferase</keyword>
<keyword id="KW-1185">Reference proteome</keyword>
<keyword id="KW-0808">Transferase</keyword>
<evidence type="ECO:0000269" key="1">
    <source>
    </source>
</evidence>
<evidence type="ECO:0000303" key="2">
    <source>
    </source>
</evidence>
<evidence type="ECO:0000305" key="3"/>
<evidence type="ECO:0000305" key="4">
    <source>
    </source>
</evidence>
<sequence length="166" mass="18580">MRIVNAADPFSINDLGCGYGALLDYLDARGFKTDYTGIDVSPEMVRAAALRFEGRANADFICAARIDREADYSVASGIFNVRLKSLDTEWCAHIEATLDMLNAASRRGFSFNCLTSYSDASKMRDDLYYADPCALFDLCKRRYSKSVALLHDYGLYEFTILVRKAS</sequence>
<feature type="chain" id="PRO_0000438346" description="Putative methyltransferase Rv1506c">
    <location>
        <begin position="1"/>
        <end position="166"/>
    </location>
</feature>
<gene>
    <name type="ordered locus">Rv1506c</name>
</gene>
<comment type="function">
    <text evidence="4">Probably plays a role in host phagosome maturation arrest, as well as a role in the synthesis of acyltrehalose-containing glycolipids (PubMed:20844580).</text>
</comment>
<comment type="disruption phenotype">
    <text evidence="1">Grows normally in liquid culture, traffics into host (human and mouse) acidified compartments early after phagocytosis, suggesting it no longer arrests phagosome maturation as well as wild-type, impaired growth in mouse macrophages (PubMed:20844580). Decreased synthesis of 2,3-di-O-acyltrehaloses (DAT) and increased synthesis of sulfoglycolipids (SGL) (PubMed:20844580). Decreased colonization of mouse lung but not spleen 42 days after infection (PubMed:20844580).</text>
</comment>
<comment type="similarity">
    <text evidence="3">Belongs to the methyltransferase superfamily.</text>
</comment>
<accession>P71785</accession>
<accession>F2GEJ7</accession>
<accession>I6XBN0</accession>
<accession>L0T9U1</accession>
<reference key="1">
    <citation type="journal article" date="1998" name="Nature">
        <title>Deciphering the biology of Mycobacterium tuberculosis from the complete genome sequence.</title>
        <authorList>
            <person name="Cole S.T."/>
            <person name="Brosch R."/>
            <person name="Parkhill J."/>
            <person name="Garnier T."/>
            <person name="Churcher C.M."/>
            <person name="Harris D.E."/>
            <person name="Gordon S.V."/>
            <person name="Eiglmeier K."/>
            <person name="Gas S."/>
            <person name="Barry C.E. III"/>
            <person name="Tekaia F."/>
            <person name="Badcock K."/>
            <person name="Basham D."/>
            <person name="Brown D."/>
            <person name="Chillingworth T."/>
            <person name="Connor R."/>
            <person name="Davies R.M."/>
            <person name="Devlin K."/>
            <person name="Feltwell T."/>
            <person name="Gentles S."/>
            <person name="Hamlin N."/>
            <person name="Holroyd S."/>
            <person name="Hornsby T."/>
            <person name="Jagels K."/>
            <person name="Krogh A."/>
            <person name="McLean J."/>
            <person name="Moule S."/>
            <person name="Murphy L.D."/>
            <person name="Oliver S."/>
            <person name="Osborne J."/>
            <person name="Quail M.A."/>
            <person name="Rajandream M.A."/>
            <person name="Rogers J."/>
            <person name="Rutter S."/>
            <person name="Seeger K."/>
            <person name="Skelton S."/>
            <person name="Squares S."/>
            <person name="Squares R."/>
            <person name="Sulston J.E."/>
            <person name="Taylor K."/>
            <person name="Whitehead S."/>
            <person name="Barrell B.G."/>
        </authorList>
    </citation>
    <scope>NUCLEOTIDE SEQUENCE [LARGE SCALE GENOMIC DNA]</scope>
    <source>
        <strain>ATCC 25618 / H37Rv</strain>
    </source>
</reference>
<reference key="2">
    <citation type="journal article" date="2010" name="PLoS Pathog.">
        <title>High content phenotypic cell-based visual screen identifies Mycobacterium tuberculosis acyltrehalose-containing glycolipids involved in phagosome remodeling.</title>
        <authorList>
            <person name="Brodin P."/>
            <person name="Poquet Y."/>
            <person name="Levillain F."/>
            <person name="Peguillet I."/>
            <person name="Larrouy-Maumus G."/>
            <person name="Gilleron M."/>
            <person name="Ewann F."/>
            <person name="Christophe T."/>
            <person name="Fenistein D."/>
            <person name="Jang J."/>
            <person name="Jang M.S."/>
            <person name="Park S.J."/>
            <person name="Rauzier J."/>
            <person name="Carralot J.P."/>
            <person name="Shrimpton R."/>
            <person name="Genovesio A."/>
            <person name="Gonzalo-Asensio J.A."/>
            <person name="Puzo G."/>
            <person name="Martin C."/>
            <person name="Brosch R."/>
            <person name="Stewart G.R."/>
            <person name="Gicquel B."/>
            <person name="Neyrolles O."/>
        </authorList>
    </citation>
    <scope>FUNCTION</scope>
    <scope>DISRUPTION PHENOTYPE</scope>
    <source>
        <strain>Beijing GC1237</strain>
    </source>
</reference>
<protein>
    <recommendedName>
        <fullName evidence="2">Putative methyltransferase Rv1506c</fullName>
        <ecNumber evidence="2">2.1.1.-</ecNumber>
    </recommendedName>
</protein>
<proteinExistence type="inferred from homology"/>
<dbReference type="EC" id="2.1.1.-" evidence="2"/>
<dbReference type="EMBL" id="AL123456">
    <property type="protein sequence ID" value="CCP44268.1"/>
    <property type="molecule type" value="Genomic_DNA"/>
</dbReference>
<dbReference type="RefSeq" id="NP_216022.1">
    <property type="nucleotide sequence ID" value="NC_000962.3"/>
</dbReference>
<dbReference type="RefSeq" id="WP_003902091.1">
    <property type="nucleotide sequence ID" value="NC_000962.3"/>
</dbReference>
<dbReference type="SMR" id="P71785"/>
<dbReference type="STRING" id="83332.Rv1506c"/>
<dbReference type="PaxDb" id="83332-Rv1506c"/>
<dbReference type="DNASU" id="886479"/>
<dbReference type="GeneID" id="886479"/>
<dbReference type="KEGG" id="mtu:Rv1506c"/>
<dbReference type="KEGG" id="mtv:RVBD_1506c"/>
<dbReference type="PATRIC" id="fig|83332.111.peg.1678"/>
<dbReference type="TubercuList" id="Rv1506c"/>
<dbReference type="eggNOG" id="COG4106">
    <property type="taxonomic scope" value="Bacteria"/>
</dbReference>
<dbReference type="InParanoid" id="P71785"/>
<dbReference type="OrthoDB" id="9808140at2"/>
<dbReference type="PhylomeDB" id="P71785"/>
<dbReference type="Proteomes" id="UP000001584">
    <property type="component" value="Chromosome"/>
</dbReference>
<dbReference type="GO" id="GO:0016020">
    <property type="term" value="C:membrane"/>
    <property type="evidence" value="ECO:0007669"/>
    <property type="project" value="GOC"/>
</dbReference>
<dbReference type="GO" id="GO:0008168">
    <property type="term" value="F:methyltransferase activity"/>
    <property type="evidence" value="ECO:0007669"/>
    <property type="project" value="UniProtKB-KW"/>
</dbReference>
<dbReference type="GO" id="GO:0009247">
    <property type="term" value="P:glycolipid biosynthetic process"/>
    <property type="evidence" value="ECO:0000314"/>
    <property type="project" value="MTBBASE"/>
</dbReference>
<dbReference type="GO" id="GO:0032259">
    <property type="term" value="P:methylation"/>
    <property type="evidence" value="ECO:0007669"/>
    <property type="project" value="UniProtKB-KW"/>
</dbReference>
<dbReference type="GO" id="GO:0052170">
    <property type="term" value="P:symbiont-mediated suppression of host innate immune response"/>
    <property type="evidence" value="ECO:0000314"/>
    <property type="project" value="MTBBASE"/>
</dbReference>
<dbReference type="CDD" id="cd02440">
    <property type="entry name" value="AdoMet_MTases"/>
    <property type="match status" value="1"/>
</dbReference>
<dbReference type="Gene3D" id="3.40.50.150">
    <property type="entry name" value="Vaccinia Virus protein VP39"/>
    <property type="match status" value="1"/>
</dbReference>
<dbReference type="InterPro" id="IPR041698">
    <property type="entry name" value="Methyltransf_25"/>
</dbReference>
<dbReference type="InterPro" id="IPR029063">
    <property type="entry name" value="SAM-dependent_MTases_sf"/>
</dbReference>
<dbReference type="Pfam" id="PF13649">
    <property type="entry name" value="Methyltransf_25"/>
    <property type="match status" value="1"/>
</dbReference>
<dbReference type="SUPFAM" id="SSF53335">
    <property type="entry name" value="S-adenosyl-L-methionine-dependent methyltransferases"/>
    <property type="match status" value="1"/>
</dbReference>
<organism>
    <name type="scientific">Mycobacterium tuberculosis (strain ATCC 25618 / H37Rv)</name>
    <dbReference type="NCBI Taxonomy" id="83332"/>
    <lineage>
        <taxon>Bacteria</taxon>
        <taxon>Bacillati</taxon>
        <taxon>Actinomycetota</taxon>
        <taxon>Actinomycetes</taxon>
        <taxon>Mycobacteriales</taxon>
        <taxon>Mycobacteriaceae</taxon>
        <taxon>Mycobacterium</taxon>
        <taxon>Mycobacterium tuberculosis complex</taxon>
    </lineage>
</organism>
<name>Y1506_MYCTU</name>